<keyword id="KW-0378">Hydrolase</keyword>
<keyword id="KW-1185">Reference proteome</keyword>
<proteinExistence type="inferred from homology"/>
<evidence type="ECO:0000255" key="1">
    <source>
        <dbReference type="HAMAP-Rule" id="MF_02101"/>
    </source>
</evidence>
<dbReference type="EC" id="3.1.2.28" evidence="1"/>
<dbReference type="EMBL" id="AE017126">
    <property type="protein sequence ID" value="AAP99244.1"/>
    <property type="molecule type" value="Genomic_DNA"/>
</dbReference>
<dbReference type="RefSeq" id="NP_874592.1">
    <property type="nucleotide sequence ID" value="NC_005042.1"/>
</dbReference>
<dbReference type="RefSeq" id="WP_011124353.1">
    <property type="nucleotide sequence ID" value="NC_005042.1"/>
</dbReference>
<dbReference type="SMR" id="Q7VE16"/>
<dbReference type="STRING" id="167539.Pro_0198"/>
<dbReference type="EnsemblBacteria" id="AAP99244">
    <property type="protein sequence ID" value="AAP99244"/>
    <property type="gene ID" value="Pro_0198"/>
</dbReference>
<dbReference type="KEGG" id="pma:Pro_0198"/>
<dbReference type="PATRIC" id="fig|167539.5.peg.205"/>
<dbReference type="eggNOG" id="COG0824">
    <property type="taxonomic scope" value="Bacteria"/>
</dbReference>
<dbReference type="HOGENOM" id="CLU_101141_5_3_3"/>
<dbReference type="OrthoDB" id="9800856at2"/>
<dbReference type="UniPathway" id="UPA00995"/>
<dbReference type="UniPathway" id="UPA01057">
    <property type="reaction ID" value="UER01033"/>
</dbReference>
<dbReference type="Proteomes" id="UP000001420">
    <property type="component" value="Chromosome"/>
</dbReference>
<dbReference type="GO" id="GO:0061522">
    <property type="term" value="F:1,4-dihydroxy-2-naphthoyl-CoA thioesterase activity"/>
    <property type="evidence" value="ECO:0007669"/>
    <property type="project" value="UniProtKB-EC"/>
</dbReference>
<dbReference type="GO" id="GO:0042372">
    <property type="term" value="P:phylloquinone biosynthetic process"/>
    <property type="evidence" value="ECO:0007669"/>
    <property type="project" value="UniProtKB-UniRule"/>
</dbReference>
<dbReference type="CDD" id="cd00586">
    <property type="entry name" value="4HBT"/>
    <property type="match status" value="1"/>
</dbReference>
<dbReference type="Gene3D" id="3.10.129.10">
    <property type="entry name" value="Hotdog Thioesterase"/>
    <property type="match status" value="1"/>
</dbReference>
<dbReference type="HAMAP" id="MF_02101">
    <property type="entry name" value="DHNA_CoA_hydrolase"/>
    <property type="match status" value="1"/>
</dbReference>
<dbReference type="InterPro" id="IPR022829">
    <property type="entry name" value="DHNA_CoA_hydrolase"/>
</dbReference>
<dbReference type="InterPro" id="IPR029069">
    <property type="entry name" value="HotDog_dom_sf"/>
</dbReference>
<dbReference type="Pfam" id="PF13279">
    <property type="entry name" value="4HBT_2"/>
    <property type="match status" value="1"/>
</dbReference>
<dbReference type="SUPFAM" id="SSF54637">
    <property type="entry name" value="Thioesterase/thiol ester dehydrase-isomerase"/>
    <property type="match status" value="1"/>
</dbReference>
<sequence length="155" mass="17559">MQSKTLQNWLHLQRIVRFGDTDAAGVIHFHQLLRWSHEAWEESLDRYGLKAVDVFPSSLGISTSTSVALPIVHCEADFFLPIGIGDKLNVQLVPVRLNIGSFEVQFTFQRREQNVAVALVRHRSIDSDSRRLCDLPEGIDRWLEASSLHRGVSAI</sequence>
<feature type="chain" id="PRO_0000377015" description="1,4-dihydroxy-2-naphthoyl-CoA hydrolase">
    <location>
        <begin position="1"/>
        <end position="155"/>
    </location>
</feature>
<feature type="active site" evidence="1">
    <location>
        <position position="22"/>
    </location>
</feature>
<name>DNCH_PROMA</name>
<gene>
    <name type="ordered locus">Pro_0198</name>
</gene>
<reference key="1">
    <citation type="journal article" date="2003" name="Proc. Natl. Acad. Sci. U.S.A.">
        <title>Genome sequence of the cyanobacterium Prochlorococcus marinus SS120, a nearly minimal oxyphototrophic genome.</title>
        <authorList>
            <person name="Dufresne A."/>
            <person name="Salanoubat M."/>
            <person name="Partensky F."/>
            <person name="Artiguenave F."/>
            <person name="Axmann I.M."/>
            <person name="Barbe V."/>
            <person name="Duprat S."/>
            <person name="Galperin M.Y."/>
            <person name="Koonin E.V."/>
            <person name="Le Gall F."/>
            <person name="Makarova K.S."/>
            <person name="Ostrowski M."/>
            <person name="Oztas S."/>
            <person name="Robert C."/>
            <person name="Rogozin I.B."/>
            <person name="Scanlan D.J."/>
            <person name="Tandeau de Marsac N."/>
            <person name="Weissenbach J."/>
            <person name="Wincker P."/>
            <person name="Wolf Y.I."/>
            <person name="Hess W.R."/>
        </authorList>
    </citation>
    <scope>NUCLEOTIDE SEQUENCE [LARGE SCALE GENOMIC DNA]</scope>
    <source>
        <strain>SARG / CCMP1375 / SS120</strain>
    </source>
</reference>
<protein>
    <recommendedName>
        <fullName evidence="1">1,4-dihydroxy-2-naphthoyl-CoA hydrolase</fullName>
        <shortName evidence="1">DHNA-CoA hydrolase</shortName>
        <ecNumber evidence="1">3.1.2.28</ecNumber>
    </recommendedName>
    <alternativeName>
        <fullName evidence="1">DHNA-CoA thioesterase</fullName>
    </alternativeName>
</protein>
<accession>Q7VE16</accession>
<organism>
    <name type="scientific">Prochlorococcus marinus (strain SARG / CCMP1375 / SS120)</name>
    <dbReference type="NCBI Taxonomy" id="167539"/>
    <lineage>
        <taxon>Bacteria</taxon>
        <taxon>Bacillati</taxon>
        <taxon>Cyanobacteriota</taxon>
        <taxon>Cyanophyceae</taxon>
        <taxon>Synechococcales</taxon>
        <taxon>Prochlorococcaceae</taxon>
        <taxon>Prochlorococcus</taxon>
    </lineage>
</organism>
<comment type="function">
    <text evidence="1">Catalyzes the hydrolysis of 1,4-dihydroxy-2-naphthoyl-CoA (DHNA-CoA) to 1,4-dihydroxy-2-naphthoate (DHNA), a reaction involved in phylloquinone (vitamin K1) biosynthesis.</text>
</comment>
<comment type="catalytic activity">
    <reaction evidence="1">
        <text>1,4-dihydroxy-2-naphthoyl-CoA + H2O = 1,4-dihydroxy-2-naphthoate + CoA + H(+)</text>
        <dbReference type="Rhea" id="RHEA:26309"/>
        <dbReference type="ChEBI" id="CHEBI:11173"/>
        <dbReference type="ChEBI" id="CHEBI:15377"/>
        <dbReference type="ChEBI" id="CHEBI:15378"/>
        <dbReference type="ChEBI" id="CHEBI:57287"/>
        <dbReference type="ChEBI" id="CHEBI:58897"/>
        <dbReference type="EC" id="3.1.2.28"/>
    </reaction>
</comment>
<comment type="pathway">
    <text evidence="1">Cofactor biosynthesis; phylloquinone biosynthesis.</text>
</comment>
<comment type="pathway">
    <text evidence="1">Quinol/quinone metabolism; 1,4-dihydroxy-2-naphthoate biosynthesis; 1,4-dihydroxy-2-naphthoate from chorismate: step 7/7.</text>
</comment>
<comment type="similarity">
    <text evidence="1">Belongs to the 4-hydroxybenzoyl-CoA thioesterase family. DHNA-CoA hydrolase subfamily.</text>
</comment>